<proteinExistence type="evidence at protein level"/>
<feature type="chain" id="PRO_0000064172" description="RING-type E3 ubiquitin-protein ligase PPIL2">
    <location>
        <begin position="1"/>
        <end position="521"/>
    </location>
</feature>
<feature type="domain" description="U-box">
    <location>
        <begin position="35"/>
        <end position="108"/>
    </location>
</feature>
<feature type="domain" description="PPIase cyclophilin-type" evidence="3">
    <location>
        <begin position="278"/>
        <end position="433"/>
    </location>
</feature>
<feature type="region of interest" description="Disordered" evidence="4">
    <location>
        <begin position="447"/>
        <end position="521"/>
    </location>
</feature>
<feature type="coiled-coil region" evidence="2">
    <location>
        <begin position="197"/>
        <end position="217"/>
    </location>
</feature>
<feature type="compositionally biased region" description="Basic and acidic residues" evidence="4">
    <location>
        <begin position="447"/>
        <end position="462"/>
    </location>
</feature>
<feature type="compositionally biased region" description="Polar residues" evidence="4">
    <location>
        <begin position="465"/>
        <end position="478"/>
    </location>
</feature>
<feature type="modified residue" description="N6-acetyllysine" evidence="1">
    <location>
        <position position="483"/>
    </location>
</feature>
<feature type="cross-link" description="Glycyl lysine isopeptide (Lys-Gly) (interchain with G-Cter in SUMO2)" evidence="1">
    <location>
        <position position="216"/>
    </location>
</feature>
<feature type="sequence conflict" description="In Ref. 1; BAB26301." evidence="7" ref="1">
    <original>K</original>
    <variation>T</variation>
    <location>
        <position position="72"/>
    </location>
</feature>
<protein>
    <recommendedName>
        <fullName evidence="7">RING-type E3 ubiquitin-protein ligase PPIL2</fullName>
        <ecNumber evidence="1">2.3.2.27</ecNumber>
    </recommendedName>
    <alternativeName>
        <fullName evidence="6">CYC4</fullName>
    </alternativeName>
    <alternativeName>
        <fullName evidence="1">Probable inactive peptidyl-prolyl cis-trans isomerase-like 2</fullName>
        <shortName evidence="1">PPIase</shortName>
    </alternativeName>
</protein>
<organism>
    <name type="scientific">Mus musculus</name>
    <name type="common">Mouse</name>
    <dbReference type="NCBI Taxonomy" id="10090"/>
    <lineage>
        <taxon>Eukaryota</taxon>
        <taxon>Metazoa</taxon>
        <taxon>Chordata</taxon>
        <taxon>Craniata</taxon>
        <taxon>Vertebrata</taxon>
        <taxon>Euteleostomi</taxon>
        <taxon>Mammalia</taxon>
        <taxon>Eutheria</taxon>
        <taxon>Euarchontoglires</taxon>
        <taxon>Glires</taxon>
        <taxon>Rodentia</taxon>
        <taxon>Myomorpha</taxon>
        <taxon>Muroidea</taxon>
        <taxon>Muridae</taxon>
        <taxon>Murinae</taxon>
        <taxon>Mus</taxon>
        <taxon>Mus</taxon>
    </lineage>
</organism>
<sequence length="521" mass="59065">MGKRQHQKDKMYITCAEYTHFYGGRKPDISQTSFRRLPFDHCSLSLQPFVYPVCTPEGVVFDLLNIVPWLKKYGTNPSTGEKLDGKSLIKLNFAKNSEGQYHCPVLYSVFTDNTHIVAIRTTGNVYTYEAVEQLNIKAKNLRDLLTDEPFSRQDIITLQDPTNLDKFNVSNFFHVKNNMRIIDPDEEKAKQDPSYYLKNTNSETRETLQELYKEFKGDEILAATMRPPEKKKVDQLNAAHYSTGKVSASFTSTAMVPETTHEAAVIDEDVLRYQFVKKKGYVRLHTNKGDLNLELHCDLTPKTCENFIKLCKKQYYDGTIFHRSIRNFVIQGGDPTGTGTGGESFWGKPFKDEFRPNLSHTGRGVLSMANSGPNTNKSQFFITFRSCAYLDKKHTIFGRVVGGFDTLTAMENVESDPKTDRPKEEVLICTTTVFVDPYEEADAQIAQERKKTQHQVDPEAKVKMSQPQPGNQGPQTYRQGVGKYIHPAATKRSAEEEPSTSTATPTAKKRPSRGFGDFSSW</sequence>
<dbReference type="EC" id="2.3.2.27" evidence="1"/>
<dbReference type="EMBL" id="AK009460">
    <property type="protein sequence ID" value="BAB26301.1"/>
    <property type="molecule type" value="mRNA"/>
</dbReference>
<dbReference type="EMBL" id="AK090052">
    <property type="protein sequence ID" value="BAC41068.1"/>
    <property type="molecule type" value="mRNA"/>
</dbReference>
<dbReference type="EMBL" id="AK161596">
    <property type="protein sequence ID" value="BAE36483.1"/>
    <property type="molecule type" value="mRNA"/>
</dbReference>
<dbReference type="EMBL" id="BC028899">
    <property type="protein sequence ID" value="AAH28899.1"/>
    <property type="molecule type" value="mRNA"/>
</dbReference>
<dbReference type="CCDS" id="CCDS27993.1"/>
<dbReference type="RefSeq" id="NP_001239373.1">
    <property type="nucleotide sequence ID" value="NM_001252444.1"/>
</dbReference>
<dbReference type="RefSeq" id="NP_001239374.1">
    <property type="nucleotide sequence ID" value="NM_001252445.1"/>
</dbReference>
<dbReference type="RefSeq" id="NP_659203.1">
    <property type="nucleotide sequence ID" value="NM_144954.3"/>
</dbReference>
<dbReference type="SMR" id="Q9D787"/>
<dbReference type="BioGRID" id="211180">
    <property type="interactions" value="2"/>
</dbReference>
<dbReference type="FunCoup" id="Q9D787">
    <property type="interactions" value="4227"/>
</dbReference>
<dbReference type="STRING" id="10090.ENSMUSP00000155861"/>
<dbReference type="iPTMnet" id="Q9D787"/>
<dbReference type="PhosphoSitePlus" id="Q9D787"/>
<dbReference type="SwissPalm" id="Q9D787"/>
<dbReference type="PaxDb" id="10090-ENSMUSP00000023455"/>
<dbReference type="PeptideAtlas" id="Q9D787"/>
<dbReference type="ProteomicsDB" id="289808"/>
<dbReference type="Pumba" id="Q9D787"/>
<dbReference type="Antibodypedia" id="23562">
    <property type="antibodies" value="208 antibodies from 27 providers"/>
</dbReference>
<dbReference type="DNASU" id="66053"/>
<dbReference type="Ensembl" id="ENSMUST00000023455.14">
    <property type="protein sequence ID" value="ENSMUSP00000023455.6"/>
    <property type="gene ID" value="ENSMUSG00000022771.18"/>
</dbReference>
<dbReference type="Ensembl" id="ENSMUST00000164458.10">
    <property type="protein sequence ID" value="ENSMUSP00000131422.3"/>
    <property type="gene ID" value="ENSMUSG00000022771.18"/>
</dbReference>
<dbReference type="Ensembl" id="ENSMUST00000231712.2">
    <property type="protein sequence ID" value="ENSMUSP00000155861.2"/>
    <property type="gene ID" value="ENSMUSG00000022771.18"/>
</dbReference>
<dbReference type="GeneID" id="66053"/>
<dbReference type="KEGG" id="mmu:66053"/>
<dbReference type="UCSC" id="uc007yjx.2">
    <property type="organism name" value="mouse"/>
</dbReference>
<dbReference type="AGR" id="MGI:2447857"/>
<dbReference type="CTD" id="23759"/>
<dbReference type="MGI" id="MGI:2447857">
    <property type="gene designation" value="Ppil2"/>
</dbReference>
<dbReference type="VEuPathDB" id="HostDB:ENSMUSG00000022771"/>
<dbReference type="eggNOG" id="KOG0883">
    <property type="taxonomic scope" value="Eukaryota"/>
</dbReference>
<dbReference type="GeneTree" id="ENSGT00940000153189"/>
<dbReference type="HOGENOM" id="CLU_012062_7_0_1"/>
<dbReference type="InParanoid" id="Q9D787"/>
<dbReference type="OMA" id="NFIKHCA"/>
<dbReference type="OrthoDB" id="30774at2759"/>
<dbReference type="PhylomeDB" id="Q9D787"/>
<dbReference type="TreeFam" id="TF300854"/>
<dbReference type="Reactome" id="R-MMU-210991">
    <property type="pathway name" value="Basigin interactions"/>
</dbReference>
<dbReference type="Reactome" id="R-MMU-72163">
    <property type="pathway name" value="mRNA Splicing - Major Pathway"/>
</dbReference>
<dbReference type="UniPathway" id="UPA00143"/>
<dbReference type="BioGRID-ORCS" id="66053">
    <property type="hits" value="28 hits in 79 CRISPR screens"/>
</dbReference>
<dbReference type="ChiTaRS" id="Ppil2">
    <property type="organism name" value="mouse"/>
</dbReference>
<dbReference type="PRO" id="PR:Q9D787"/>
<dbReference type="Proteomes" id="UP000000589">
    <property type="component" value="Chromosome 16"/>
</dbReference>
<dbReference type="RNAct" id="Q9D787">
    <property type="molecule type" value="protein"/>
</dbReference>
<dbReference type="Bgee" id="ENSMUSG00000022771">
    <property type="expression patterns" value="Expressed in spermatocyte and 267 other cell types or tissues"/>
</dbReference>
<dbReference type="ExpressionAtlas" id="Q9D787">
    <property type="expression patterns" value="baseline and differential"/>
</dbReference>
<dbReference type="GO" id="GO:0005737">
    <property type="term" value="C:cytoplasm"/>
    <property type="evidence" value="ECO:0000250"/>
    <property type="project" value="UniProtKB"/>
</dbReference>
<dbReference type="GO" id="GO:0005654">
    <property type="term" value="C:nucleoplasm"/>
    <property type="evidence" value="ECO:0007669"/>
    <property type="project" value="Ensembl"/>
</dbReference>
<dbReference type="GO" id="GO:0005634">
    <property type="term" value="C:nucleus"/>
    <property type="evidence" value="ECO:0000250"/>
    <property type="project" value="UniProtKB"/>
</dbReference>
<dbReference type="GO" id="GO:0005886">
    <property type="term" value="C:plasma membrane"/>
    <property type="evidence" value="ECO:0000250"/>
    <property type="project" value="UniProtKB"/>
</dbReference>
<dbReference type="GO" id="GO:0005681">
    <property type="term" value="C:spliceosomal complex"/>
    <property type="evidence" value="ECO:0007669"/>
    <property type="project" value="UniProtKB-KW"/>
</dbReference>
<dbReference type="GO" id="GO:0003755">
    <property type="term" value="F:peptidyl-prolyl cis-trans isomerase activity"/>
    <property type="evidence" value="ECO:0007669"/>
    <property type="project" value="InterPro"/>
</dbReference>
<dbReference type="GO" id="GO:0061630">
    <property type="term" value="F:ubiquitin protein ligase activity"/>
    <property type="evidence" value="ECO:0000266"/>
    <property type="project" value="MGI"/>
</dbReference>
<dbReference type="GO" id="GO:0004842">
    <property type="term" value="F:ubiquitin-protein transferase activity"/>
    <property type="evidence" value="ECO:0000250"/>
    <property type="project" value="UniProtKB"/>
</dbReference>
<dbReference type="GO" id="GO:0034450">
    <property type="term" value="F:ubiquitin-ubiquitin ligase activity"/>
    <property type="evidence" value="ECO:0000250"/>
    <property type="project" value="UniProtKB"/>
</dbReference>
<dbReference type="GO" id="GO:0006397">
    <property type="term" value="P:mRNA processing"/>
    <property type="evidence" value="ECO:0007669"/>
    <property type="project" value="UniProtKB-KW"/>
</dbReference>
<dbReference type="GO" id="GO:0006457">
    <property type="term" value="P:protein folding"/>
    <property type="evidence" value="ECO:0007669"/>
    <property type="project" value="InterPro"/>
</dbReference>
<dbReference type="GO" id="GO:0072659">
    <property type="term" value="P:protein localization to plasma membrane"/>
    <property type="evidence" value="ECO:0000250"/>
    <property type="project" value="UniProtKB"/>
</dbReference>
<dbReference type="GO" id="GO:0000209">
    <property type="term" value="P:protein polyubiquitination"/>
    <property type="evidence" value="ECO:0000250"/>
    <property type="project" value="UniProtKB"/>
</dbReference>
<dbReference type="GO" id="GO:0008380">
    <property type="term" value="P:RNA splicing"/>
    <property type="evidence" value="ECO:0007669"/>
    <property type="project" value="UniProtKB-KW"/>
</dbReference>
<dbReference type="CDD" id="cd01923">
    <property type="entry name" value="cyclophilin_RING"/>
    <property type="match status" value="1"/>
</dbReference>
<dbReference type="CDD" id="cd16663">
    <property type="entry name" value="RING-Ubox_PPIL2"/>
    <property type="match status" value="1"/>
</dbReference>
<dbReference type="FunFam" id="3.30.40.10:FF:000079">
    <property type="entry name" value="Peptidyl-prolyl cis-trans isomerase 2"/>
    <property type="match status" value="1"/>
</dbReference>
<dbReference type="FunFam" id="2.40.100.10:FF:000018">
    <property type="entry name" value="Peptidyl-prolyl cis-trans isomerase-like 2"/>
    <property type="match status" value="1"/>
</dbReference>
<dbReference type="Gene3D" id="2.40.100.10">
    <property type="entry name" value="Cyclophilin-like"/>
    <property type="match status" value="1"/>
</dbReference>
<dbReference type="Gene3D" id="1.20.5.460">
    <property type="entry name" value="Single helix bin"/>
    <property type="match status" value="1"/>
</dbReference>
<dbReference type="Gene3D" id="3.30.40.10">
    <property type="entry name" value="Zinc/RING finger domain, C3HC4 (zinc finger)"/>
    <property type="match status" value="1"/>
</dbReference>
<dbReference type="InterPro" id="IPR029000">
    <property type="entry name" value="Cyclophilin-like_dom_sf"/>
</dbReference>
<dbReference type="InterPro" id="IPR020892">
    <property type="entry name" value="Cyclophilin-type_PPIase_CS"/>
</dbReference>
<dbReference type="InterPro" id="IPR002130">
    <property type="entry name" value="Cyclophilin-type_PPIase_dom"/>
</dbReference>
<dbReference type="InterPro" id="IPR044666">
    <property type="entry name" value="Cyclophilin_A-like"/>
</dbReference>
<dbReference type="InterPro" id="IPR026951">
    <property type="entry name" value="PPIL2_U-box_dom"/>
</dbReference>
<dbReference type="InterPro" id="IPR003613">
    <property type="entry name" value="Ubox_domain"/>
</dbReference>
<dbReference type="InterPro" id="IPR013083">
    <property type="entry name" value="Znf_RING/FYVE/PHD"/>
</dbReference>
<dbReference type="PANTHER" id="PTHR45625">
    <property type="entry name" value="PEPTIDYL-PROLYL CIS-TRANS ISOMERASE-RELATED"/>
    <property type="match status" value="1"/>
</dbReference>
<dbReference type="PANTHER" id="PTHR45625:SF1">
    <property type="entry name" value="RING-TYPE E3 UBIQUITIN-PROTEIN LIGASE PPIL2"/>
    <property type="match status" value="1"/>
</dbReference>
<dbReference type="Pfam" id="PF00160">
    <property type="entry name" value="Pro_isomerase"/>
    <property type="match status" value="1"/>
</dbReference>
<dbReference type="PRINTS" id="PR00153">
    <property type="entry name" value="CSAPPISMRASE"/>
</dbReference>
<dbReference type="SMART" id="SM00504">
    <property type="entry name" value="Ubox"/>
    <property type="match status" value="1"/>
</dbReference>
<dbReference type="SUPFAM" id="SSF50891">
    <property type="entry name" value="Cyclophilin-like"/>
    <property type="match status" value="1"/>
</dbReference>
<dbReference type="SUPFAM" id="SSF57850">
    <property type="entry name" value="RING/U-box"/>
    <property type="match status" value="1"/>
</dbReference>
<dbReference type="PROSITE" id="PS00170">
    <property type="entry name" value="CSA_PPIASE_1"/>
    <property type="match status" value="1"/>
</dbReference>
<dbReference type="PROSITE" id="PS50072">
    <property type="entry name" value="CSA_PPIASE_2"/>
    <property type="match status" value="1"/>
</dbReference>
<dbReference type="PROSITE" id="PS51698">
    <property type="entry name" value="U_BOX"/>
    <property type="match status" value="1"/>
</dbReference>
<name>PPIL2_MOUSE</name>
<keyword id="KW-0007">Acetylation</keyword>
<keyword id="KW-0175">Coiled coil</keyword>
<keyword id="KW-1017">Isopeptide bond</keyword>
<keyword id="KW-0507">mRNA processing</keyword>
<keyword id="KW-0508">mRNA splicing</keyword>
<keyword id="KW-0539">Nucleus</keyword>
<keyword id="KW-1185">Reference proteome</keyword>
<keyword id="KW-0747">Spliceosome</keyword>
<keyword id="KW-0808">Transferase</keyword>
<keyword id="KW-0832">Ubl conjugation</keyword>
<keyword id="KW-0833">Ubl conjugation pathway</keyword>
<comment type="function">
    <text evidence="1">Has a ubiquitin-protein ligase activity acting as an E3 ubiquitin protein ligase or as an ubiquitin-ubiquitin ligase promoting elongation of ubiquitin chains on substrates. By mediating 'Lys-48'-linked polyubiquitination of proteins could target them for proteasomal degradation. May also function as a chaperone, playing a role in transport to the cell membrane of BSG/Basigin for instance. Probable inactive PPIase with no peptidyl-prolyl cis-trans isomerase activity. As a component of the minor spliceosome, involved in the splicing of U12-type introns in pre-mRNAs (By similarity).</text>
</comment>
<comment type="catalytic activity">
    <reaction evidence="1">
        <text>S-ubiquitinyl-[E2 ubiquitin-conjugating enzyme]-L-cysteine + [acceptor protein]-L-lysine = [E2 ubiquitin-conjugating enzyme]-L-cysteine + N(6)-ubiquitinyl-[acceptor protein]-L-lysine.</text>
        <dbReference type="EC" id="2.3.2.27"/>
    </reaction>
</comment>
<comment type="pathway">
    <text evidence="1">Protein modification; protein ubiquitination.</text>
</comment>
<comment type="subunit">
    <text evidence="1 5">Component of the minor spliceosome, which splices U12-type introns. Within this complex, interacts with PRPF8/PRP8, EFTUD2/SNU114 and PLRG1 (By similarity). Interacts with isoform 2 of BSG (By similarity). Interacts (via the PPIase cyclophilin-type domain) with CRNKL1; they may form a trimeric complex with HSP90.</text>
</comment>
<comment type="subcellular location">
    <subcellularLocation>
        <location evidence="1">Nucleus</location>
    </subcellularLocation>
</comment>
<comment type="similarity">
    <text evidence="7">Belongs to the cyclophilin-type PPIase family. PPIL2 subfamily.</text>
</comment>
<comment type="caution">
    <text evidence="1">Despite the fact that it belongs to the cyclophilin-type PPIase family, it has probably no peptidyl-prolyl cis-trans isomerase activity due to the presence of a tyrosine instead of a tryptophan at position 389.</text>
</comment>
<gene>
    <name evidence="8" type="primary">Ppil2</name>
</gene>
<accession>Q9D787</accession>
<accession>Q542A2</accession>
<accession>Q9CZL1</accession>
<reference key="1">
    <citation type="journal article" date="2005" name="Science">
        <title>The transcriptional landscape of the mammalian genome.</title>
        <authorList>
            <person name="Carninci P."/>
            <person name="Kasukawa T."/>
            <person name="Katayama S."/>
            <person name="Gough J."/>
            <person name="Frith M.C."/>
            <person name="Maeda N."/>
            <person name="Oyama R."/>
            <person name="Ravasi T."/>
            <person name="Lenhard B."/>
            <person name="Wells C."/>
            <person name="Kodzius R."/>
            <person name="Shimokawa K."/>
            <person name="Bajic V.B."/>
            <person name="Brenner S.E."/>
            <person name="Batalov S."/>
            <person name="Forrest A.R."/>
            <person name="Zavolan M."/>
            <person name="Davis M.J."/>
            <person name="Wilming L.G."/>
            <person name="Aidinis V."/>
            <person name="Allen J.E."/>
            <person name="Ambesi-Impiombato A."/>
            <person name="Apweiler R."/>
            <person name="Aturaliya R.N."/>
            <person name="Bailey T.L."/>
            <person name="Bansal M."/>
            <person name="Baxter L."/>
            <person name="Beisel K.W."/>
            <person name="Bersano T."/>
            <person name="Bono H."/>
            <person name="Chalk A.M."/>
            <person name="Chiu K.P."/>
            <person name="Choudhary V."/>
            <person name="Christoffels A."/>
            <person name="Clutterbuck D.R."/>
            <person name="Crowe M.L."/>
            <person name="Dalla E."/>
            <person name="Dalrymple B.P."/>
            <person name="de Bono B."/>
            <person name="Della Gatta G."/>
            <person name="di Bernardo D."/>
            <person name="Down T."/>
            <person name="Engstrom P."/>
            <person name="Fagiolini M."/>
            <person name="Faulkner G."/>
            <person name="Fletcher C.F."/>
            <person name="Fukushima T."/>
            <person name="Furuno M."/>
            <person name="Futaki S."/>
            <person name="Gariboldi M."/>
            <person name="Georgii-Hemming P."/>
            <person name="Gingeras T.R."/>
            <person name="Gojobori T."/>
            <person name="Green R.E."/>
            <person name="Gustincich S."/>
            <person name="Harbers M."/>
            <person name="Hayashi Y."/>
            <person name="Hensch T.K."/>
            <person name="Hirokawa N."/>
            <person name="Hill D."/>
            <person name="Huminiecki L."/>
            <person name="Iacono M."/>
            <person name="Ikeo K."/>
            <person name="Iwama A."/>
            <person name="Ishikawa T."/>
            <person name="Jakt M."/>
            <person name="Kanapin A."/>
            <person name="Katoh M."/>
            <person name="Kawasawa Y."/>
            <person name="Kelso J."/>
            <person name="Kitamura H."/>
            <person name="Kitano H."/>
            <person name="Kollias G."/>
            <person name="Krishnan S.P."/>
            <person name="Kruger A."/>
            <person name="Kummerfeld S.K."/>
            <person name="Kurochkin I.V."/>
            <person name="Lareau L.F."/>
            <person name="Lazarevic D."/>
            <person name="Lipovich L."/>
            <person name="Liu J."/>
            <person name="Liuni S."/>
            <person name="McWilliam S."/>
            <person name="Madan Babu M."/>
            <person name="Madera M."/>
            <person name="Marchionni L."/>
            <person name="Matsuda H."/>
            <person name="Matsuzawa S."/>
            <person name="Miki H."/>
            <person name="Mignone F."/>
            <person name="Miyake S."/>
            <person name="Morris K."/>
            <person name="Mottagui-Tabar S."/>
            <person name="Mulder N."/>
            <person name="Nakano N."/>
            <person name="Nakauchi H."/>
            <person name="Ng P."/>
            <person name="Nilsson R."/>
            <person name="Nishiguchi S."/>
            <person name="Nishikawa S."/>
            <person name="Nori F."/>
            <person name="Ohara O."/>
            <person name="Okazaki Y."/>
            <person name="Orlando V."/>
            <person name="Pang K.C."/>
            <person name="Pavan W.J."/>
            <person name="Pavesi G."/>
            <person name="Pesole G."/>
            <person name="Petrovsky N."/>
            <person name="Piazza S."/>
            <person name="Reed J."/>
            <person name="Reid J.F."/>
            <person name="Ring B.Z."/>
            <person name="Ringwald M."/>
            <person name="Rost B."/>
            <person name="Ruan Y."/>
            <person name="Salzberg S.L."/>
            <person name="Sandelin A."/>
            <person name="Schneider C."/>
            <person name="Schoenbach C."/>
            <person name="Sekiguchi K."/>
            <person name="Semple C.A."/>
            <person name="Seno S."/>
            <person name="Sessa L."/>
            <person name="Sheng Y."/>
            <person name="Shibata Y."/>
            <person name="Shimada H."/>
            <person name="Shimada K."/>
            <person name="Silva D."/>
            <person name="Sinclair B."/>
            <person name="Sperling S."/>
            <person name="Stupka E."/>
            <person name="Sugiura K."/>
            <person name="Sultana R."/>
            <person name="Takenaka Y."/>
            <person name="Taki K."/>
            <person name="Tammoja K."/>
            <person name="Tan S.L."/>
            <person name="Tang S."/>
            <person name="Taylor M.S."/>
            <person name="Tegner J."/>
            <person name="Teichmann S.A."/>
            <person name="Ueda H.R."/>
            <person name="van Nimwegen E."/>
            <person name="Verardo R."/>
            <person name="Wei C.L."/>
            <person name="Yagi K."/>
            <person name="Yamanishi H."/>
            <person name="Zabarovsky E."/>
            <person name="Zhu S."/>
            <person name="Zimmer A."/>
            <person name="Hide W."/>
            <person name="Bult C."/>
            <person name="Grimmond S.M."/>
            <person name="Teasdale R.D."/>
            <person name="Liu E.T."/>
            <person name="Brusic V."/>
            <person name="Quackenbush J."/>
            <person name="Wahlestedt C."/>
            <person name="Mattick J.S."/>
            <person name="Hume D.A."/>
            <person name="Kai C."/>
            <person name="Sasaki D."/>
            <person name="Tomaru Y."/>
            <person name="Fukuda S."/>
            <person name="Kanamori-Katayama M."/>
            <person name="Suzuki M."/>
            <person name="Aoki J."/>
            <person name="Arakawa T."/>
            <person name="Iida J."/>
            <person name="Imamura K."/>
            <person name="Itoh M."/>
            <person name="Kato T."/>
            <person name="Kawaji H."/>
            <person name="Kawagashira N."/>
            <person name="Kawashima T."/>
            <person name="Kojima M."/>
            <person name="Kondo S."/>
            <person name="Konno H."/>
            <person name="Nakano K."/>
            <person name="Ninomiya N."/>
            <person name="Nishio T."/>
            <person name="Okada M."/>
            <person name="Plessy C."/>
            <person name="Shibata K."/>
            <person name="Shiraki T."/>
            <person name="Suzuki S."/>
            <person name="Tagami M."/>
            <person name="Waki K."/>
            <person name="Watahiki A."/>
            <person name="Okamura-Oho Y."/>
            <person name="Suzuki H."/>
            <person name="Kawai J."/>
            <person name="Hayashizaki Y."/>
        </authorList>
    </citation>
    <scope>NUCLEOTIDE SEQUENCE [LARGE SCALE MRNA]</scope>
    <source>
        <strain>C57BL/6J</strain>
        <tissue>Head</tissue>
        <tissue>Tongue</tissue>
    </source>
</reference>
<reference key="2">
    <citation type="journal article" date="2004" name="Genome Res.">
        <title>The status, quality, and expansion of the NIH full-length cDNA project: the Mammalian Gene Collection (MGC).</title>
        <authorList>
            <consortium name="The MGC Project Team"/>
        </authorList>
    </citation>
    <scope>NUCLEOTIDE SEQUENCE [LARGE SCALE MRNA]</scope>
    <source>
        <strain>Czech II</strain>
        <tissue>Mammary gland</tissue>
    </source>
</reference>
<reference key="3">
    <citation type="journal article" date="2004" name="Genes Cells">
        <title>Interaction of U-box-type ubiquitin-protein ligases (E3s) with molecular chaperones.</title>
        <authorList>
            <person name="Hatakeyama S."/>
            <person name="Matsumoto M."/>
            <person name="Yada M."/>
            <person name="Nakayama K.I."/>
        </authorList>
    </citation>
    <scope>INTERACTION WITH CRNKL1 AND HSP90</scope>
</reference>
<reference key="4">
    <citation type="journal article" date="2010" name="Cell">
        <title>A tissue-specific atlas of mouse protein phosphorylation and expression.</title>
        <authorList>
            <person name="Huttlin E.L."/>
            <person name="Jedrychowski M.P."/>
            <person name="Elias J.E."/>
            <person name="Goswami T."/>
            <person name="Rad R."/>
            <person name="Beausoleil S.A."/>
            <person name="Villen J."/>
            <person name="Haas W."/>
            <person name="Sowa M.E."/>
            <person name="Gygi S.P."/>
        </authorList>
    </citation>
    <scope>IDENTIFICATION BY MASS SPECTROMETRY [LARGE SCALE ANALYSIS]</scope>
    <source>
        <tissue>Spleen</tissue>
        <tissue>Testis</tissue>
    </source>
</reference>
<evidence type="ECO:0000250" key="1">
    <source>
        <dbReference type="UniProtKB" id="Q13356"/>
    </source>
</evidence>
<evidence type="ECO:0000255" key="2"/>
<evidence type="ECO:0000255" key="3">
    <source>
        <dbReference type="PROSITE-ProRule" id="PRU00156"/>
    </source>
</evidence>
<evidence type="ECO:0000256" key="4">
    <source>
        <dbReference type="SAM" id="MobiDB-lite"/>
    </source>
</evidence>
<evidence type="ECO:0000269" key="5">
    <source>
    </source>
</evidence>
<evidence type="ECO:0000303" key="6">
    <source>
    </source>
</evidence>
<evidence type="ECO:0000305" key="7"/>
<evidence type="ECO:0000312" key="8">
    <source>
        <dbReference type="MGI" id="MGI:2447857"/>
    </source>
</evidence>